<keyword id="KW-0997">Cell inner membrane</keyword>
<keyword id="KW-1003">Cell membrane</keyword>
<keyword id="KW-0407">Ion channel</keyword>
<keyword id="KW-0406">Ion transport</keyword>
<keyword id="KW-0472">Membrane</keyword>
<keyword id="KW-0479">Metal-binding</keyword>
<keyword id="KW-1185">Reference proteome</keyword>
<keyword id="KW-0915">Sodium</keyword>
<keyword id="KW-0812">Transmembrane</keyword>
<keyword id="KW-1133">Transmembrane helix</keyword>
<keyword id="KW-0813">Transport</keyword>
<accession>B6IQX6</accession>
<sequence length="126" mass="12629">MKMILAVAAGGGLGAVARYLTGVGLGHWLGTAYPWATMTVNVTGSFAMGVLAGLGAHVWQPAPELRAFLMVGVLGGFTTFSSFSLDVALLVERGAIGAAAAYVAASFLLSVGGLFAGLALIRTAVA</sequence>
<reference key="1">
    <citation type="submission" date="2007-03" db="EMBL/GenBank/DDBJ databases">
        <title>Genome sequence of Rhodospirillum centenum.</title>
        <authorList>
            <person name="Touchman J.W."/>
            <person name="Bauer C."/>
            <person name="Blankenship R.E."/>
        </authorList>
    </citation>
    <scope>NUCLEOTIDE SEQUENCE [LARGE SCALE GENOMIC DNA]</scope>
    <source>
        <strain>ATCC 51521 / SW</strain>
    </source>
</reference>
<name>FLUC_RHOCS</name>
<protein>
    <recommendedName>
        <fullName evidence="1">Fluoride-specific ion channel FluC</fullName>
    </recommendedName>
</protein>
<organism>
    <name type="scientific">Rhodospirillum centenum (strain ATCC 51521 / SW)</name>
    <dbReference type="NCBI Taxonomy" id="414684"/>
    <lineage>
        <taxon>Bacteria</taxon>
        <taxon>Pseudomonadati</taxon>
        <taxon>Pseudomonadota</taxon>
        <taxon>Alphaproteobacteria</taxon>
        <taxon>Rhodospirillales</taxon>
        <taxon>Rhodospirillaceae</taxon>
        <taxon>Rhodospirillum</taxon>
    </lineage>
</organism>
<evidence type="ECO:0000255" key="1">
    <source>
        <dbReference type="HAMAP-Rule" id="MF_00454"/>
    </source>
</evidence>
<proteinExistence type="inferred from homology"/>
<comment type="function">
    <text evidence="1">Fluoride-specific ion channel. Important for reducing fluoride concentration in the cell, thus reducing its toxicity.</text>
</comment>
<comment type="catalytic activity">
    <reaction evidence="1">
        <text>fluoride(in) = fluoride(out)</text>
        <dbReference type="Rhea" id="RHEA:76159"/>
        <dbReference type="ChEBI" id="CHEBI:17051"/>
    </reaction>
    <physiologicalReaction direction="left-to-right" evidence="1">
        <dbReference type="Rhea" id="RHEA:76160"/>
    </physiologicalReaction>
</comment>
<comment type="activity regulation">
    <text evidence="1">Na(+) is not transported, but it plays an essential structural role and its presence is essential for fluoride channel function.</text>
</comment>
<comment type="subcellular location">
    <subcellularLocation>
        <location evidence="1">Cell inner membrane</location>
        <topology evidence="1">Multi-pass membrane protein</topology>
    </subcellularLocation>
</comment>
<comment type="similarity">
    <text evidence="1">Belongs to the fluoride channel Fluc/FEX (TC 1.A.43) family.</text>
</comment>
<gene>
    <name evidence="1" type="primary">fluC</name>
    <name evidence="1" type="synonym">crcB</name>
    <name type="ordered locus">RC1_0423</name>
</gene>
<dbReference type="EMBL" id="CP000613">
    <property type="protein sequence ID" value="ACI97862.1"/>
    <property type="molecule type" value="Genomic_DNA"/>
</dbReference>
<dbReference type="RefSeq" id="WP_012565654.1">
    <property type="nucleotide sequence ID" value="NC_011420.2"/>
</dbReference>
<dbReference type="SMR" id="B6IQX6"/>
<dbReference type="STRING" id="414684.RC1_0423"/>
<dbReference type="KEGG" id="rce:RC1_0423"/>
<dbReference type="eggNOG" id="COG0239">
    <property type="taxonomic scope" value="Bacteria"/>
</dbReference>
<dbReference type="HOGENOM" id="CLU_114342_2_3_5"/>
<dbReference type="OrthoDB" id="9806299at2"/>
<dbReference type="Proteomes" id="UP000001591">
    <property type="component" value="Chromosome"/>
</dbReference>
<dbReference type="GO" id="GO:0005886">
    <property type="term" value="C:plasma membrane"/>
    <property type="evidence" value="ECO:0007669"/>
    <property type="project" value="UniProtKB-SubCell"/>
</dbReference>
<dbReference type="GO" id="GO:0062054">
    <property type="term" value="F:fluoride channel activity"/>
    <property type="evidence" value="ECO:0007669"/>
    <property type="project" value="UniProtKB-UniRule"/>
</dbReference>
<dbReference type="GO" id="GO:0046872">
    <property type="term" value="F:metal ion binding"/>
    <property type="evidence" value="ECO:0007669"/>
    <property type="project" value="UniProtKB-KW"/>
</dbReference>
<dbReference type="GO" id="GO:0140114">
    <property type="term" value="P:cellular detoxification of fluoride"/>
    <property type="evidence" value="ECO:0007669"/>
    <property type="project" value="UniProtKB-UniRule"/>
</dbReference>
<dbReference type="HAMAP" id="MF_00454">
    <property type="entry name" value="FluC"/>
    <property type="match status" value="1"/>
</dbReference>
<dbReference type="InterPro" id="IPR003691">
    <property type="entry name" value="FluC"/>
</dbReference>
<dbReference type="NCBIfam" id="NF010791">
    <property type="entry name" value="PRK14195.1"/>
    <property type="match status" value="1"/>
</dbReference>
<dbReference type="PANTHER" id="PTHR28259">
    <property type="entry name" value="FLUORIDE EXPORT PROTEIN 1-RELATED"/>
    <property type="match status" value="1"/>
</dbReference>
<dbReference type="PANTHER" id="PTHR28259:SF1">
    <property type="entry name" value="FLUORIDE EXPORT PROTEIN 1-RELATED"/>
    <property type="match status" value="1"/>
</dbReference>
<dbReference type="Pfam" id="PF02537">
    <property type="entry name" value="CRCB"/>
    <property type="match status" value="1"/>
</dbReference>
<feature type="chain" id="PRO_1000206261" description="Fluoride-specific ion channel FluC">
    <location>
        <begin position="1"/>
        <end position="126"/>
    </location>
</feature>
<feature type="transmembrane region" description="Helical" evidence="1">
    <location>
        <begin position="3"/>
        <end position="23"/>
    </location>
</feature>
<feature type="transmembrane region" description="Helical" evidence="1">
    <location>
        <begin position="39"/>
        <end position="59"/>
    </location>
</feature>
<feature type="transmembrane region" description="Helical" evidence="1">
    <location>
        <begin position="71"/>
        <end position="91"/>
    </location>
</feature>
<feature type="transmembrane region" description="Helical" evidence="1">
    <location>
        <begin position="101"/>
        <end position="121"/>
    </location>
</feature>
<feature type="binding site" evidence="1">
    <location>
        <position position="75"/>
    </location>
    <ligand>
        <name>Na(+)</name>
        <dbReference type="ChEBI" id="CHEBI:29101"/>
        <note>structural</note>
    </ligand>
</feature>
<feature type="binding site" evidence="1">
    <location>
        <position position="78"/>
    </location>
    <ligand>
        <name>Na(+)</name>
        <dbReference type="ChEBI" id="CHEBI:29101"/>
        <note>structural</note>
    </ligand>
</feature>